<protein>
    <recommendedName>
        <fullName evidence="1">Argininosuccinate lyase</fullName>
        <shortName evidence="1">ASAL</shortName>
        <ecNumber evidence="1">4.3.2.1</ecNumber>
    </recommendedName>
    <alternativeName>
        <fullName evidence="1">Arginosuccinase</fullName>
    </alternativeName>
</protein>
<sequence length="462" mass="52459">MQKTWSDRFEEGLNPFIESFNASINFDFLLIEEDLDGSIAHARMLAKTGIITSEEADQLEAALQKIRLEASQGLFKPDISDEDVHMSVERRLISILGPLGKKLHTARSRNDQVGTDLRLWLRRRIDDIDIELKKLQVALFKKAEKNLLTLIPGYTHLQRAQPLSLAHHLLAYIEMLQRDRNRLADVRERVNICPLGAAALAGTSLPIDRAFTANQLGFTSIYSNSLDAVSDRDFTVEFTAAASLIMTHISRLADEIILWASEEFSFVRLTDRCSTGSSLMPQKKNPDVPELVRGKTGRVFGHLQSLLTMMKGLPLAYNKDFQEDKEAVFDTVKTVRDSLKAMTILLEEGLEFSLERLKETVEADFSNATDVADYLVSKNIPFREAYQIVGRVVRLCIQKKILLKDLTLKEWQEINTLIDHDIYEKITPEKVVAARISDGGTGFDRVREELEKWRNDLISLNQ</sequence>
<dbReference type="EC" id="4.3.2.1" evidence="1"/>
<dbReference type="EMBL" id="AE017126">
    <property type="protein sequence ID" value="AAP99058.1"/>
    <property type="molecule type" value="Genomic_DNA"/>
</dbReference>
<dbReference type="RefSeq" id="NP_874406.1">
    <property type="nucleotide sequence ID" value="NC_005042.1"/>
</dbReference>
<dbReference type="RefSeq" id="WP_011124167.1">
    <property type="nucleotide sequence ID" value="NC_005042.1"/>
</dbReference>
<dbReference type="SMR" id="Q7VEK0"/>
<dbReference type="STRING" id="167539.Pro_0012"/>
<dbReference type="EnsemblBacteria" id="AAP99058">
    <property type="protein sequence ID" value="AAP99058"/>
    <property type="gene ID" value="Pro_0012"/>
</dbReference>
<dbReference type="KEGG" id="pma:Pro_0012"/>
<dbReference type="PATRIC" id="fig|167539.5.peg.12"/>
<dbReference type="eggNOG" id="COG0165">
    <property type="taxonomic scope" value="Bacteria"/>
</dbReference>
<dbReference type="HOGENOM" id="CLU_027272_2_3_3"/>
<dbReference type="OrthoDB" id="9769623at2"/>
<dbReference type="UniPathway" id="UPA00068">
    <property type="reaction ID" value="UER00114"/>
</dbReference>
<dbReference type="Proteomes" id="UP000001420">
    <property type="component" value="Chromosome"/>
</dbReference>
<dbReference type="GO" id="GO:0005829">
    <property type="term" value="C:cytosol"/>
    <property type="evidence" value="ECO:0007669"/>
    <property type="project" value="TreeGrafter"/>
</dbReference>
<dbReference type="GO" id="GO:0004056">
    <property type="term" value="F:argininosuccinate lyase activity"/>
    <property type="evidence" value="ECO:0007669"/>
    <property type="project" value="UniProtKB-UniRule"/>
</dbReference>
<dbReference type="GO" id="GO:0042450">
    <property type="term" value="P:arginine biosynthetic process via ornithine"/>
    <property type="evidence" value="ECO:0007669"/>
    <property type="project" value="InterPro"/>
</dbReference>
<dbReference type="GO" id="GO:0006526">
    <property type="term" value="P:L-arginine biosynthetic process"/>
    <property type="evidence" value="ECO:0007669"/>
    <property type="project" value="UniProtKB-UniRule"/>
</dbReference>
<dbReference type="CDD" id="cd01359">
    <property type="entry name" value="Argininosuccinate_lyase"/>
    <property type="match status" value="1"/>
</dbReference>
<dbReference type="FunFam" id="1.10.275.10:FF:000002">
    <property type="entry name" value="Argininosuccinate lyase"/>
    <property type="match status" value="1"/>
</dbReference>
<dbReference type="FunFam" id="1.10.40.30:FF:000001">
    <property type="entry name" value="Argininosuccinate lyase"/>
    <property type="match status" value="1"/>
</dbReference>
<dbReference type="FunFam" id="1.20.200.10:FF:000015">
    <property type="entry name" value="argininosuccinate lyase isoform X2"/>
    <property type="match status" value="1"/>
</dbReference>
<dbReference type="Gene3D" id="1.10.40.30">
    <property type="entry name" value="Fumarase/aspartase (C-terminal domain)"/>
    <property type="match status" value="1"/>
</dbReference>
<dbReference type="Gene3D" id="1.20.200.10">
    <property type="entry name" value="Fumarase/aspartase (Central domain)"/>
    <property type="match status" value="1"/>
</dbReference>
<dbReference type="Gene3D" id="1.10.275.10">
    <property type="entry name" value="Fumarase/aspartase (N-terminal domain)"/>
    <property type="match status" value="1"/>
</dbReference>
<dbReference type="HAMAP" id="MF_00006">
    <property type="entry name" value="Arg_succ_lyase"/>
    <property type="match status" value="1"/>
</dbReference>
<dbReference type="InterPro" id="IPR029419">
    <property type="entry name" value="Arg_succ_lyase_C"/>
</dbReference>
<dbReference type="InterPro" id="IPR009049">
    <property type="entry name" value="Argininosuccinate_lyase"/>
</dbReference>
<dbReference type="InterPro" id="IPR024083">
    <property type="entry name" value="Fumarase/histidase_N"/>
</dbReference>
<dbReference type="InterPro" id="IPR020557">
    <property type="entry name" value="Fumarate_lyase_CS"/>
</dbReference>
<dbReference type="InterPro" id="IPR000362">
    <property type="entry name" value="Fumarate_lyase_fam"/>
</dbReference>
<dbReference type="InterPro" id="IPR022761">
    <property type="entry name" value="Fumarate_lyase_N"/>
</dbReference>
<dbReference type="InterPro" id="IPR008948">
    <property type="entry name" value="L-Aspartase-like"/>
</dbReference>
<dbReference type="NCBIfam" id="TIGR00838">
    <property type="entry name" value="argH"/>
    <property type="match status" value="1"/>
</dbReference>
<dbReference type="PANTHER" id="PTHR43814">
    <property type="entry name" value="ARGININOSUCCINATE LYASE"/>
    <property type="match status" value="1"/>
</dbReference>
<dbReference type="PANTHER" id="PTHR43814:SF1">
    <property type="entry name" value="ARGININOSUCCINATE LYASE"/>
    <property type="match status" value="1"/>
</dbReference>
<dbReference type="Pfam" id="PF14698">
    <property type="entry name" value="ASL_C2"/>
    <property type="match status" value="1"/>
</dbReference>
<dbReference type="Pfam" id="PF00206">
    <property type="entry name" value="Lyase_1"/>
    <property type="match status" value="1"/>
</dbReference>
<dbReference type="PRINTS" id="PR00145">
    <property type="entry name" value="ARGSUCLYASE"/>
</dbReference>
<dbReference type="PRINTS" id="PR00149">
    <property type="entry name" value="FUMRATELYASE"/>
</dbReference>
<dbReference type="SUPFAM" id="SSF48557">
    <property type="entry name" value="L-aspartase-like"/>
    <property type="match status" value="1"/>
</dbReference>
<dbReference type="PROSITE" id="PS00163">
    <property type="entry name" value="FUMARATE_LYASES"/>
    <property type="match status" value="1"/>
</dbReference>
<keyword id="KW-0028">Amino-acid biosynthesis</keyword>
<keyword id="KW-0055">Arginine biosynthesis</keyword>
<keyword id="KW-0963">Cytoplasm</keyword>
<keyword id="KW-0456">Lyase</keyword>
<keyword id="KW-1185">Reference proteome</keyword>
<gene>
    <name evidence="1" type="primary">argH</name>
    <name type="ordered locus">Pro_0012</name>
</gene>
<comment type="catalytic activity">
    <reaction evidence="1">
        <text>2-(N(omega)-L-arginino)succinate = fumarate + L-arginine</text>
        <dbReference type="Rhea" id="RHEA:24020"/>
        <dbReference type="ChEBI" id="CHEBI:29806"/>
        <dbReference type="ChEBI" id="CHEBI:32682"/>
        <dbReference type="ChEBI" id="CHEBI:57472"/>
        <dbReference type="EC" id="4.3.2.1"/>
    </reaction>
</comment>
<comment type="pathway">
    <text evidence="1">Amino-acid biosynthesis; L-arginine biosynthesis; L-arginine from L-ornithine and carbamoyl phosphate: step 3/3.</text>
</comment>
<comment type="subcellular location">
    <subcellularLocation>
        <location evidence="1">Cytoplasm</location>
    </subcellularLocation>
</comment>
<comment type="similarity">
    <text evidence="1">Belongs to the lyase 1 family. Argininosuccinate lyase subfamily.</text>
</comment>
<name>ARLY_PROMA</name>
<evidence type="ECO:0000255" key="1">
    <source>
        <dbReference type="HAMAP-Rule" id="MF_00006"/>
    </source>
</evidence>
<organism>
    <name type="scientific">Prochlorococcus marinus (strain SARG / CCMP1375 / SS120)</name>
    <dbReference type="NCBI Taxonomy" id="167539"/>
    <lineage>
        <taxon>Bacteria</taxon>
        <taxon>Bacillati</taxon>
        <taxon>Cyanobacteriota</taxon>
        <taxon>Cyanophyceae</taxon>
        <taxon>Synechococcales</taxon>
        <taxon>Prochlorococcaceae</taxon>
        <taxon>Prochlorococcus</taxon>
    </lineage>
</organism>
<feature type="chain" id="PRO_0000137803" description="Argininosuccinate lyase">
    <location>
        <begin position="1"/>
        <end position="462"/>
    </location>
</feature>
<reference key="1">
    <citation type="journal article" date="2003" name="Proc. Natl. Acad. Sci. U.S.A.">
        <title>Genome sequence of the cyanobacterium Prochlorococcus marinus SS120, a nearly minimal oxyphototrophic genome.</title>
        <authorList>
            <person name="Dufresne A."/>
            <person name="Salanoubat M."/>
            <person name="Partensky F."/>
            <person name="Artiguenave F."/>
            <person name="Axmann I.M."/>
            <person name="Barbe V."/>
            <person name="Duprat S."/>
            <person name="Galperin M.Y."/>
            <person name="Koonin E.V."/>
            <person name="Le Gall F."/>
            <person name="Makarova K.S."/>
            <person name="Ostrowski M."/>
            <person name="Oztas S."/>
            <person name="Robert C."/>
            <person name="Rogozin I.B."/>
            <person name="Scanlan D.J."/>
            <person name="Tandeau de Marsac N."/>
            <person name="Weissenbach J."/>
            <person name="Wincker P."/>
            <person name="Wolf Y.I."/>
            <person name="Hess W.R."/>
        </authorList>
    </citation>
    <scope>NUCLEOTIDE SEQUENCE [LARGE SCALE GENOMIC DNA]</scope>
    <source>
        <strain>SARG / CCMP1375 / SS120</strain>
    </source>
</reference>
<accession>Q7VEK0</accession>
<proteinExistence type="inferred from homology"/>